<proteinExistence type="evidence at transcript level"/>
<organism>
    <name type="scientific">Bacteroides ovatus</name>
    <dbReference type="NCBI Taxonomy" id="28116"/>
    <lineage>
        <taxon>Bacteria</taxon>
        <taxon>Pseudomonadati</taxon>
        <taxon>Bacteroidota</taxon>
        <taxon>Bacteroidia</taxon>
        <taxon>Bacteroidales</taxon>
        <taxon>Bacteroidaceae</taxon>
        <taxon>Bacteroides</taxon>
    </lineage>
</organism>
<gene>
    <name type="primary">xsa</name>
</gene>
<protein>
    <recommendedName>
        <fullName>Xylosidase/arabinosidase</fullName>
    </recommendedName>
    <domain>
        <recommendedName>
            <fullName>Beta-xylosidase</fullName>
            <ecNumber>3.2.1.37</ecNumber>
        </recommendedName>
        <alternativeName>
            <fullName>1,4-beta-D-xylan xylohydrolase</fullName>
        </alternativeName>
        <alternativeName>
            <fullName>Xylan 1,4-beta-xylosidase</fullName>
        </alternativeName>
    </domain>
    <domain>
        <recommendedName>
            <fullName>Alpha-L-arabinofuranosidase</fullName>
            <shortName>Arabinosidase</shortName>
            <ecNumber>3.2.1.55</ecNumber>
        </recommendedName>
    </domain>
</protein>
<feature type="chain" id="PRO_0000057693" description="Xylosidase/arabinosidase">
    <location>
        <begin position="1"/>
        <end position="325"/>
    </location>
</feature>
<feature type="active site" description="Proton acceptor" evidence="1">
    <location>
        <position position="16"/>
    </location>
</feature>
<feature type="active site" description="Proton donor" evidence="1">
    <location>
        <position position="224"/>
    </location>
</feature>
<feature type="site" description="Important for catalytic activity, responsible for pKa modulation of the active site Glu and correct orientation of both the proton donor and substrate" evidence="1">
    <location>
        <position position="137"/>
    </location>
</feature>
<dbReference type="EC" id="3.2.1.37"/>
<dbReference type="EC" id="3.2.1.55"/>
<dbReference type="EMBL" id="U04957">
    <property type="protein sequence ID" value="AAB08024.1"/>
    <property type="molecule type" value="Genomic_DNA"/>
</dbReference>
<dbReference type="PIR" id="S55893">
    <property type="entry name" value="S55893"/>
</dbReference>
<dbReference type="RefSeq" id="WP_004300838.1">
    <property type="nucleotide sequence ID" value="NZ_WTXO01000021.1"/>
</dbReference>
<dbReference type="SMR" id="P49943"/>
<dbReference type="STRING" id="28116.Bovatus_01724"/>
<dbReference type="CAZy" id="GH43">
    <property type="family name" value="Glycoside Hydrolase Family 43"/>
</dbReference>
<dbReference type="GO" id="GO:0046556">
    <property type="term" value="F:alpha-L-arabinofuranosidase activity"/>
    <property type="evidence" value="ECO:0007669"/>
    <property type="project" value="UniProtKB-EC"/>
</dbReference>
<dbReference type="GO" id="GO:0009044">
    <property type="term" value="F:xylan 1,4-beta-xylosidase activity"/>
    <property type="evidence" value="ECO:0007669"/>
    <property type="project" value="UniProtKB-EC"/>
</dbReference>
<dbReference type="GO" id="GO:0045493">
    <property type="term" value="P:xylan catabolic process"/>
    <property type="evidence" value="ECO:0007669"/>
    <property type="project" value="UniProtKB-KW"/>
</dbReference>
<dbReference type="CDD" id="cd18619">
    <property type="entry name" value="GH43_CoXyl43_like"/>
    <property type="match status" value="1"/>
</dbReference>
<dbReference type="Gene3D" id="2.115.10.20">
    <property type="entry name" value="Glycosyl hydrolase domain, family 43"/>
    <property type="match status" value="1"/>
</dbReference>
<dbReference type="InterPro" id="IPR006710">
    <property type="entry name" value="Glyco_hydro_43"/>
</dbReference>
<dbReference type="InterPro" id="IPR023296">
    <property type="entry name" value="Glyco_hydro_beta-prop_sf"/>
</dbReference>
<dbReference type="InterPro" id="IPR052176">
    <property type="entry name" value="Glycosyl_Hydrlase_43_Enz"/>
</dbReference>
<dbReference type="PANTHER" id="PTHR43772">
    <property type="entry name" value="ENDO-1,4-BETA-XYLANASE"/>
    <property type="match status" value="1"/>
</dbReference>
<dbReference type="PANTHER" id="PTHR43772:SF2">
    <property type="entry name" value="PUTATIVE (AFU_ORTHOLOGUE AFUA_2G04480)-RELATED"/>
    <property type="match status" value="1"/>
</dbReference>
<dbReference type="Pfam" id="PF04616">
    <property type="entry name" value="Glyco_hydro_43"/>
    <property type="match status" value="1"/>
</dbReference>
<dbReference type="SUPFAM" id="SSF75005">
    <property type="entry name" value="Arabinanase/levansucrase/invertase"/>
    <property type="match status" value="1"/>
</dbReference>
<name>XYLB_BACOV</name>
<sequence length="325" mass="37246">MKTEKRYLVPGDYMADPAVHVFDGKLYIYPSHDWESGIAENDNGDHFNMKDYHVYSMDDVMNGEIKDHGVVLSTEDIPWAGRQLWDCDVVCKDGKYYMYFPLKDQNDIFRIGVAVSDKPYGPFIPEANPMKGSYSIDPAVWDDGDGNYYIYFGGLWGGQLQRYRNNKALESAILPEGEEEAIPSRVARLSEDMMEFAEEPRAVVILDEDGKPLTAGDTERRFFEASWMHKYNGKYYFSYSTGDTHLLCYATGDNPYGPFTYQGVILTPVVGWTTHHAIVEFKGKWYLFHHDCVPSEGKTWLRSLKVCELQYDADGRIITIEGKDE</sequence>
<keyword id="KW-0119">Carbohydrate metabolism</keyword>
<keyword id="KW-0326">Glycosidase</keyword>
<keyword id="KW-0378">Hydrolase</keyword>
<keyword id="KW-0511">Multifunctional enzyme</keyword>
<keyword id="KW-0624">Polysaccharide degradation</keyword>
<keyword id="KW-0858">Xylan degradation</keyword>
<accession>P49943</accession>
<reference key="1">
    <citation type="journal article" date="1995" name="Biochim. Biophys. Acta">
        <title>Nucleotide sequences of xylan-inducible xylanase and xylosidase/arabinosidase genes from Bacteroides ovatus V975.</title>
        <authorList>
            <person name="Whitehead T.R."/>
        </authorList>
    </citation>
    <scope>NUCLEOTIDE SEQUENCE [GENOMIC DNA]</scope>
    <source>
        <strain>V975</strain>
    </source>
</reference>
<comment type="catalytic activity">
    <reaction>
        <text>Hydrolysis of (1-&gt;4)-beta-D-xylans, to remove successive D-xylose residues from the non-reducing termini.</text>
        <dbReference type="EC" id="3.2.1.37"/>
    </reaction>
</comment>
<comment type="catalytic activity">
    <reaction>
        <text>Hydrolysis of terminal non-reducing alpha-L-arabinofuranoside residues in alpha-L-arabinosides.</text>
        <dbReference type="EC" id="3.2.1.55"/>
    </reaction>
</comment>
<comment type="induction">
    <text>By xylan.</text>
</comment>
<comment type="similarity">
    <text evidence="2">Belongs to the glycosyl hydrolase 43 family.</text>
</comment>
<evidence type="ECO:0000250" key="1">
    <source>
        <dbReference type="UniProtKB" id="Q45071"/>
    </source>
</evidence>
<evidence type="ECO:0000305" key="2"/>